<accession>Q9X6Y2</accession>
<feature type="chain" id="PRO_0000067702" description="DNA-directed RNA polymerase subunit beta'">
    <location>
        <begin position="1"/>
        <end position="1576"/>
    </location>
</feature>
<feature type="binding site" evidence="1">
    <location>
        <position position="64"/>
    </location>
    <ligand>
        <name>Zn(2+)</name>
        <dbReference type="ChEBI" id="CHEBI:29105"/>
        <label>1</label>
    </ligand>
</feature>
<feature type="binding site" evidence="1">
    <location>
        <position position="66"/>
    </location>
    <ligand>
        <name>Zn(2+)</name>
        <dbReference type="ChEBI" id="CHEBI:29105"/>
        <label>1</label>
    </ligand>
</feature>
<feature type="binding site" evidence="1">
    <location>
        <position position="79"/>
    </location>
    <ligand>
        <name>Zn(2+)</name>
        <dbReference type="ChEBI" id="CHEBI:29105"/>
        <label>1</label>
    </ligand>
</feature>
<feature type="binding site" evidence="1">
    <location>
        <position position="82"/>
    </location>
    <ligand>
        <name>Zn(2+)</name>
        <dbReference type="ChEBI" id="CHEBI:29105"/>
        <label>1</label>
    </ligand>
</feature>
<feature type="binding site" evidence="1">
    <location>
        <position position="590"/>
    </location>
    <ligand>
        <name>Mg(2+)</name>
        <dbReference type="ChEBI" id="CHEBI:18420"/>
    </ligand>
</feature>
<feature type="binding site" evidence="1">
    <location>
        <position position="592"/>
    </location>
    <ligand>
        <name>Mg(2+)</name>
        <dbReference type="ChEBI" id="CHEBI:18420"/>
    </ligand>
</feature>
<feature type="binding site" evidence="1">
    <location>
        <position position="594"/>
    </location>
    <ligand>
        <name>Mg(2+)</name>
        <dbReference type="ChEBI" id="CHEBI:18420"/>
    </ligand>
</feature>
<feature type="binding site" evidence="1">
    <location>
        <position position="928"/>
    </location>
    <ligand>
        <name>Zn(2+)</name>
        <dbReference type="ChEBI" id="CHEBI:29105"/>
        <label>2</label>
    </ligand>
</feature>
<feature type="binding site" evidence="1">
    <location>
        <position position="1002"/>
    </location>
    <ligand>
        <name>Zn(2+)</name>
        <dbReference type="ChEBI" id="CHEBI:29105"/>
        <label>2</label>
    </ligand>
</feature>
<feature type="binding site" evidence="1">
    <location>
        <position position="1009"/>
    </location>
    <ligand>
        <name>Zn(2+)</name>
        <dbReference type="ChEBI" id="CHEBI:29105"/>
        <label>2</label>
    </ligand>
</feature>
<feature type="binding site" evidence="1">
    <location>
        <position position="1012"/>
    </location>
    <ligand>
        <name>Zn(2+)</name>
        <dbReference type="ChEBI" id="CHEBI:29105"/>
        <label>2</label>
    </ligand>
</feature>
<dbReference type="EC" id="2.7.7.6" evidence="1"/>
<dbReference type="EMBL" id="X75046">
    <property type="protein sequence ID" value="CAA52958.1"/>
    <property type="molecule type" value="Genomic_DNA"/>
</dbReference>
<dbReference type="SMR" id="Q9X6Y2"/>
<dbReference type="GO" id="GO:0000428">
    <property type="term" value="C:DNA-directed RNA polymerase complex"/>
    <property type="evidence" value="ECO:0007669"/>
    <property type="project" value="UniProtKB-KW"/>
</dbReference>
<dbReference type="GO" id="GO:0003677">
    <property type="term" value="F:DNA binding"/>
    <property type="evidence" value="ECO:0007669"/>
    <property type="project" value="UniProtKB-UniRule"/>
</dbReference>
<dbReference type="GO" id="GO:0003899">
    <property type="term" value="F:DNA-directed RNA polymerase activity"/>
    <property type="evidence" value="ECO:0007669"/>
    <property type="project" value="UniProtKB-UniRule"/>
</dbReference>
<dbReference type="GO" id="GO:0000287">
    <property type="term" value="F:magnesium ion binding"/>
    <property type="evidence" value="ECO:0007669"/>
    <property type="project" value="UniProtKB-UniRule"/>
</dbReference>
<dbReference type="GO" id="GO:0008270">
    <property type="term" value="F:zinc ion binding"/>
    <property type="evidence" value="ECO:0007669"/>
    <property type="project" value="UniProtKB-UniRule"/>
</dbReference>
<dbReference type="GO" id="GO:0006351">
    <property type="term" value="P:DNA-templated transcription"/>
    <property type="evidence" value="ECO:0007669"/>
    <property type="project" value="UniProtKB-UniRule"/>
</dbReference>
<dbReference type="CDD" id="cd02655">
    <property type="entry name" value="RNAP_beta'_C"/>
    <property type="match status" value="1"/>
</dbReference>
<dbReference type="CDD" id="cd01609">
    <property type="entry name" value="RNAP_beta'_N"/>
    <property type="match status" value="1"/>
</dbReference>
<dbReference type="FunFam" id="1.10.132.30:FF:000003">
    <property type="entry name" value="DNA-directed RNA polymerase subunit beta"/>
    <property type="match status" value="1"/>
</dbReference>
<dbReference type="FunFam" id="1.10.150.390:FF:000002">
    <property type="entry name" value="DNA-directed RNA polymerase subunit beta"/>
    <property type="match status" value="1"/>
</dbReference>
<dbReference type="Gene3D" id="1.10.132.30">
    <property type="match status" value="1"/>
</dbReference>
<dbReference type="Gene3D" id="1.10.150.390">
    <property type="match status" value="1"/>
</dbReference>
<dbReference type="Gene3D" id="1.10.1790.20">
    <property type="match status" value="1"/>
</dbReference>
<dbReference type="Gene3D" id="1.10.40.90">
    <property type="match status" value="1"/>
</dbReference>
<dbReference type="Gene3D" id="2.40.40.20">
    <property type="match status" value="1"/>
</dbReference>
<dbReference type="Gene3D" id="2.40.50.100">
    <property type="match status" value="4"/>
</dbReference>
<dbReference type="Gene3D" id="4.10.860.120">
    <property type="entry name" value="RNA polymerase II, clamp domain"/>
    <property type="match status" value="1"/>
</dbReference>
<dbReference type="Gene3D" id="1.10.274.100">
    <property type="entry name" value="RNA polymerase Rpb1, domain 3"/>
    <property type="match status" value="2"/>
</dbReference>
<dbReference type="HAMAP" id="MF_01322">
    <property type="entry name" value="RNApol_bact_RpoC"/>
    <property type="match status" value="1"/>
</dbReference>
<dbReference type="InterPro" id="IPR045867">
    <property type="entry name" value="DNA-dir_RpoC_beta_prime"/>
</dbReference>
<dbReference type="InterPro" id="IPR012754">
    <property type="entry name" value="DNA-dir_RpoC_beta_prime_bact"/>
</dbReference>
<dbReference type="InterPro" id="IPR000722">
    <property type="entry name" value="RNA_pol_asu"/>
</dbReference>
<dbReference type="InterPro" id="IPR006592">
    <property type="entry name" value="RNA_pol_N"/>
</dbReference>
<dbReference type="InterPro" id="IPR007080">
    <property type="entry name" value="RNA_pol_Rpb1_1"/>
</dbReference>
<dbReference type="InterPro" id="IPR007066">
    <property type="entry name" value="RNA_pol_Rpb1_3"/>
</dbReference>
<dbReference type="InterPro" id="IPR042102">
    <property type="entry name" value="RNA_pol_Rpb1_3_sf"/>
</dbReference>
<dbReference type="InterPro" id="IPR007083">
    <property type="entry name" value="RNA_pol_Rpb1_4"/>
</dbReference>
<dbReference type="InterPro" id="IPR007081">
    <property type="entry name" value="RNA_pol_Rpb1_5"/>
</dbReference>
<dbReference type="InterPro" id="IPR044893">
    <property type="entry name" value="RNA_pol_Rpb1_clamp_domain"/>
</dbReference>
<dbReference type="InterPro" id="IPR038120">
    <property type="entry name" value="Rpb1_funnel_sf"/>
</dbReference>
<dbReference type="InterPro" id="IPR011054">
    <property type="entry name" value="Rudment_hybrid_motif"/>
</dbReference>
<dbReference type="NCBIfam" id="TIGR02386">
    <property type="entry name" value="rpoC_TIGR"/>
    <property type="match status" value="1"/>
</dbReference>
<dbReference type="PANTHER" id="PTHR19376">
    <property type="entry name" value="DNA-DIRECTED RNA POLYMERASE"/>
    <property type="match status" value="1"/>
</dbReference>
<dbReference type="PANTHER" id="PTHR19376:SF54">
    <property type="entry name" value="DNA-DIRECTED RNA POLYMERASE SUBUNIT BETA"/>
    <property type="match status" value="1"/>
</dbReference>
<dbReference type="Pfam" id="PF04997">
    <property type="entry name" value="RNA_pol_Rpb1_1"/>
    <property type="match status" value="1"/>
</dbReference>
<dbReference type="Pfam" id="PF00623">
    <property type="entry name" value="RNA_pol_Rpb1_2"/>
    <property type="match status" value="1"/>
</dbReference>
<dbReference type="Pfam" id="PF04983">
    <property type="entry name" value="RNA_pol_Rpb1_3"/>
    <property type="match status" value="1"/>
</dbReference>
<dbReference type="Pfam" id="PF05000">
    <property type="entry name" value="RNA_pol_Rpb1_4"/>
    <property type="match status" value="1"/>
</dbReference>
<dbReference type="Pfam" id="PF04998">
    <property type="entry name" value="RNA_pol_Rpb1_5"/>
    <property type="match status" value="1"/>
</dbReference>
<dbReference type="SMART" id="SM00663">
    <property type="entry name" value="RPOLA_N"/>
    <property type="match status" value="1"/>
</dbReference>
<dbReference type="SUPFAM" id="SSF64484">
    <property type="entry name" value="beta and beta-prime subunits of DNA dependent RNA-polymerase"/>
    <property type="match status" value="1"/>
</dbReference>
<dbReference type="SUPFAM" id="SSF51246">
    <property type="entry name" value="Rudiment single hybrid motif"/>
    <property type="match status" value="1"/>
</dbReference>
<reference key="1">
    <citation type="journal article" date="1999" name="J. Mol. Evol.">
        <title>RNA polymerase of Aquifex pyrophilus: implications for the evolution of the bacterial rpoBC operon and extremely thermophilic bacteria.</title>
        <authorList>
            <person name="Klenk H.-P."/>
            <person name="Meier T.D."/>
            <person name="Durovic P."/>
            <person name="Schwass V."/>
            <person name="Lottspeich F."/>
            <person name="Dennis P.P."/>
            <person name="Zillig W."/>
        </authorList>
    </citation>
    <scope>NUCLEOTIDE SEQUENCE [GENOMIC DNA]</scope>
    <source>
        <strain>DSM 6858 / JCM 9492 / Kol5A</strain>
    </source>
</reference>
<sequence>MSTKGRGIFPFSKIKLMLASPDDIRSWSHGEVKRPETLNYRTLKPEKDGLFCAKIFGPTKDYECLCGKYRGKRYEGKICEKCGVEVTSSYVRRERFGHIELAAPVVHIWFLKSTPSKIGTLLNLTSRDVERVAYFESYLVIEYPNEEEEEKFEKEEGTIPLNDGISTKWVKLHVVNEEEFEEKYAFSIDEKYEYGMGAEILKEVLSKIDLEAYSKKLKELVKPYSLGFEDLGREVAEKYKNLYQKLVKVIADDFRAYGVELKGLEDKGLTLEQAIHRIITEELYLNVETGEVEFEDCGDNCLTGREALRVYYEKVREHKRDIPIFEKIKEDVRTAVLREVSEARIRKALRILQLVEGFKKSGNRPEWMILEVLPVIPPELRPLVALDGGRFATSDLNDLYRRVINRNNRLKRLIELSAPDIIIRNEKRMLQEAVDALIDNGKRGNPVKQNGRPLKSLADYLKGKQGRFRQNLLGKRVDYSGRSVIVVGPELQMHQCGLPKIMALELFKPFVYRRLEEKGYATSIKHAKKLVEQKTPEVWECLEEVVKQHPVLLNRAPTLHRPSIQAFEPVLVEGKAIQLHPLVCPPFNADFDGDQMAVHVPLGIEAQLESYILMLSTQNILSPAHGKPLTMPSQDMVLGTYYMTHDPIPGRKGEGKAFTSYEEVIKALELGHVDIHAKIKFKVGKEWIETTPGRVLFNSIMPEGQPFVNETLDKKRLSKLITNLYIAVGNEETVKFLDRVKELGFLRSTLAGISIGIDDLQVPKVKEKIIKEALKKTEEIWNQYVQGIITNKERYNRIIDVWSEATNAVSKAMFEEIEHSTEIRNGKEYPGTFNPIYMMAVSGARGNRDQIRQLAGMRGLMAKHSGEFIETPIISNFREGLSVLEYFISTYGARKGLADTALKTAFAGYLTRRLVDVAQDITITEKDCGTVKGFEMEPIVEAGEERVPLKDRIFGRVLAEDVKDPYTGEVIAKRNEVVDEKLAERIARAGIEKVKVRSPLTCEAKHGVCAMCYGWDLSQRKIVSVGEAVGIIAAQSIGEPGTQLTMRTFHIGGAATAQKVQSFVKTESEGTVKFYNVKFIVNRKGEKINVSKDAAIGVLDEKGRLLERHTIPYGARLLVDEGQKVKAGTKLADWDPFNTYIIAEVGGKIELRDIILDVTVREERDVITGKTATVVSFMRPKDAMLHTPRIAVITEDGKEYVYDLPVNAILNIPADKLTLEWRICPTCSESEETTIQHQYYVVKELEVQPGDILARIPKETAKVRDIVGGLPRVEELFEARKPKNPAILSEIDGYVKIYEDADEVIVFNPRTGETKKYAIKKDELILVRHGQYIKKGQKITETKVAEIDGQVRIKGRGFKVIVYNPETGLQREYFVPKGKFLLVKEGDYVKAGDPLTDGTPVPEEILRIKGIEELEKFLLKEVQMVYKLQGVDINDKHFEIIIRQMLKKVRIIDPGDSRFLVGEEVDKEELEEEIQRIKLEGGKLPKAEPVLVGITRAALSTRSWISAASFQETTRVLTDASVEGKIDELRGLKENVIIGNLIPAGTGVDEYKEVDVIPAEEKVLEEKPQSSEEETS</sequence>
<gene>
    <name evidence="1" type="primary">rpoC</name>
</gene>
<organism>
    <name type="scientific">Aquifex pyrophilus</name>
    <dbReference type="NCBI Taxonomy" id="2714"/>
    <lineage>
        <taxon>Bacteria</taxon>
        <taxon>Pseudomonadati</taxon>
        <taxon>Aquificota</taxon>
        <taxon>Aquificia</taxon>
        <taxon>Aquificales</taxon>
        <taxon>Aquificaceae</taxon>
        <taxon>Aquifex</taxon>
    </lineage>
</organism>
<protein>
    <recommendedName>
        <fullName evidence="1">DNA-directed RNA polymerase subunit beta'</fullName>
        <shortName evidence="1">RNAP subunit beta'</shortName>
        <ecNumber evidence="1">2.7.7.6</ecNumber>
    </recommendedName>
    <alternativeName>
        <fullName evidence="1">RNA polymerase subunit beta'</fullName>
    </alternativeName>
    <alternativeName>
        <fullName evidence="1">Transcriptase subunit beta'</fullName>
    </alternativeName>
</protein>
<keyword id="KW-0240">DNA-directed RNA polymerase</keyword>
<keyword id="KW-0460">Magnesium</keyword>
<keyword id="KW-0479">Metal-binding</keyword>
<keyword id="KW-0548">Nucleotidyltransferase</keyword>
<keyword id="KW-0804">Transcription</keyword>
<keyword id="KW-0808">Transferase</keyword>
<keyword id="KW-0862">Zinc</keyword>
<evidence type="ECO:0000255" key="1">
    <source>
        <dbReference type="HAMAP-Rule" id="MF_01322"/>
    </source>
</evidence>
<proteinExistence type="inferred from homology"/>
<comment type="function">
    <text evidence="1">DNA-dependent RNA polymerase catalyzes the transcription of DNA into RNA using the four ribonucleoside triphosphates as substrates.</text>
</comment>
<comment type="catalytic activity">
    <reaction evidence="1">
        <text>RNA(n) + a ribonucleoside 5'-triphosphate = RNA(n+1) + diphosphate</text>
        <dbReference type="Rhea" id="RHEA:21248"/>
        <dbReference type="Rhea" id="RHEA-COMP:14527"/>
        <dbReference type="Rhea" id="RHEA-COMP:17342"/>
        <dbReference type="ChEBI" id="CHEBI:33019"/>
        <dbReference type="ChEBI" id="CHEBI:61557"/>
        <dbReference type="ChEBI" id="CHEBI:140395"/>
        <dbReference type="EC" id="2.7.7.6"/>
    </reaction>
</comment>
<comment type="cofactor">
    <cofactor evidence="1">
        <name>Mg(2+)</name>
        <dbReference type="ChEBI" id="CHEBI:18420"/>
    </cofactor>
    <text evidence="1">Binds 1 Mg(2+) ion per subunit.</text>
</comment>
<comment type="cofactor">
    <cofactor evidence="1">
        <name>Zn(2+)</name>
        <dbReference type="ChEBI" id="CHEBI:29105"/>
    </cofactor>
    <text evidence="1">Binds 2 Zn(2+) ions per subunit.</text>
</comment>
<comment type="subunit">
    <text evidence="1">The RNAP catalytic core consists of 2 alpha, 1 beta, 1 beta' and 1 omega subunit. When a sigma factor is associated with the core the holoenzyme is formed, which can initiate transcription.</text>
</comment>
<comment type="similarity">
    <text evidence="1">Belongs to the RNA polymerase beta' chain family.</text>
</comment>
<name>RPOC_AQUPY</name>